<dbReference type="EMBL" id="AP006861">
    <property type="protein sequence ID" value="BAE81145.1"/>
    <property type="molecule type" value="Genomic_DNA"/>
</dbReference>
<dbReference type="RefSeq" id="WP_011457925.1">
    <property type="nucleotide sequence ID" value="NC_007899.1"/>
</dbReference>
<dbReference type="SMR" id="Q254Z3"/>
<dbReference type="STRING" id="264202.CF0373"/>
<dbReference type="KEGG" id="cfe:CF0373"/>
<dbReference type="eggNOG" id="COG1678">
    <property type="taxonomic scope" value="Bacteria"/>
</dbReference>
<dbReference type="HOGENOM" id="CLU_057596_2_1_0"/>
<dbReference type="OrthoDB" id="9807486at2"/>
<dbReference type="Proteomes" id="UP000001260">
    <property type="component" value="Chromosome"/>
</dbReference>
<dbReference type="GO" id="GO:0005829">
    <property type="term" value="C:cytosol"/>
    <property type="evidence" value="ECO:0007669"/>
    <property type="project" value="TreeGrafter"/>
</dbReference>
<dbReference type="Gene3D" id="3.40.1740.10">
    <property type="entry name" value="VC0467-like"/>
    <property type="match status" value="1"/>
</dbReference>
<dbReference type="HAMAP" id="MF_00758">
    <property type="entry name" value="UPF0301"/>
    <property type="match status" value="1"/>
</dbReference>
<dbReference type="InterPro" id="IPR003774">
    <property type="entry name" value="AlgH-like"/>
</dbReference>
<dbReference type="NCBIfam" id="NF001271">
    <property type="entry name" value="PRK00228.2-3"/>
    <property type="match status" value="1"/>
</dbReference>
<dbReference type="PANTHER" id="PTHR30327">
    <property type="entry name" value="UNCHARACTERIZED PROTEIN YQGE"/>
    <property type="match status" value="1"/>
</dbReference>
<dbReference type="PANTHER" id="PTHR30327:SF1">
    <property type="entry name" value="UPF0301 PROTEIN YQGE"/>
    <property type="match status" value="1"/>
</dbReference>
<dbReference type="Pfam" id="PF02622">
    <property type="entry name" value="DUF179"/>
    <property type="match status" value="1"/>
</dbReference>
<dbReference type="SUPFAM" id="SSF143456">
    <property type="entry name" value="VC0467-like"/>
    <property type="match status" value="1"/>
</dbReference>
<name>Y373_CHLFF</name>
<sequence>MEKIPYAILEKGSLLLASPDTDQGVFARSVILLCEHSLNGSFGLILNKTLGLELADDIFSFDKVTNNNIRFCMGGPLQANQMMLLHSCSEIPEQTLEICPSVYLGGDLSFLQEIAASDAGPMINLCFGYSGWQAGQLEREFLDGNWFLAPASYDYVFMDNPENLWSKILKDLGGKYASLSTVPENLFLN</sequence>
<reference key="1">
    <citation type="journal article" date="2006" name="DNA Res.">
        <title>Genome sequence of the cat pathogen, Chlamydophila felis.</title>
        <authorList>
            <person name="Azuma Y."/>
            <person name="Hirakawa H."/>
            <person name="Yamashita A."/>
            <person name="Cai Y."/>
            <person name="Rahman M.A."/>
            <person name="Suzuki H."/>
            <person name="Mitaku S."/>
            <person name="Toh H."/>
            <person name="Goto S."/>
            <person name="Murakami T."/>
            <person name="Sugi K."/>
            <person name="Hayashi H."/>
            <person name="Fukushi H."/>
            <person name="Hattori M."/>
            <person name="Kuhara S."/>
            <person name="Shirai M."/>
        </authorList>
    </citation>
    <scope>NUCLEOTIDE SEQUENCE [LARGE SCALE GENOMIC DNA]</scope>
    <source>
        <strain>Fe/C-56</strain>
    </source>
</reference>
<protein>
    <recommendedName>
        <fullName evidence="1">UPF0301 protein CF0373</fullName>
    </recommendedName>
</protein>
<comment type="similarity">
    <text evidence="1">Belongs to the UPF0301 (AlgH) family.</text>
</comment>
<proteinExistence type="inferred from homology"/>
<organism>
    <name type="scientific">Chlamydia felis (strain Fe/C-56)</name>
    <name type="common">Chlamydophila felis</name>
    <dbReference type="NCBI Taxonomy" id="264202"/>
    <lineage>
        <taxon>Bacteria</taxon>
        <taxon>Pseudomonadati</taxon>
        <taxon>Chlamydiota</taxon>
        <taxon>Chlamydiia</taxon>
        <taxon>Chlamydiales</taxon>
        <taxon>Chlamydiaceae</taxon>
        <taxon>Chlamydia/Chlamydophila group</taxon>
        <taxon>Chlamydia</taxon>
    </lineage>
</organism>
<accession>Q254Z3</accession>
<evidence type="ECO:0000255" key="1">
    <source>
        <dbReference type="HAMAP-Rule" id="MF_00758"/>
    </source>
</evidence>
<feature type="chain" id="PRO_0000258815" description="UPF0301 protein CF0373">
    <location>
        <begin position="1"/>
        <end position="189"/>
    </location>
</feature>
<gene>
    <name type="ordered locus">CF0373</name>
</gene>